<sequence length="312" mass="34678">MESVELTLKNSNMKDKTLTGGAQNGDDFSVDDLLDFSKEEEDDDVLVEDEAELKVQRKRGVSDENTLHRSNDFSTADFHTSGLSVPMDDIAELEWLSNFVDDSSFTPYSAPTNKPVWLTGNRRHLVQPVKEETCFKSQHPAVKTRPKRARTGVRVWSHGSQSLTDSSSSSTTSSSSSPRPSSPLWLASGQFLDEPMTKTQKKKKVWKNAGQTQTQTQTQTRQCGHCGVQKTPQWRAGPLGAKTLCNACGVRYKSGRLLPEYRPACSPTFSSELHSNHHSKVIEMRRKKETSDGAEETGLNQPVQTVQVVSSF</sequence>
<evidence type="ECO:0000250" key="1"/>
<evidence type="ECO:0000255" key="2"/>
<evidence type="ECO:0000255" key="3">
    <source>
        <dbReference type="PROSITE-ProRule" id="PRU00094"/>
    </source>
</evidence>
<evidence type="ECO:0000256" key="4">
    <source>
        <dbReference type="SAM" id="MobiDB-lite"/>
    </source>
</evidence>
<evidence type="ECO:0000305" key="5"/>
<name>GATA6_ARATH</name>
<reference key="1">
    <citation type="journal article" date="2000" name="Nature">
        <title>Sequence and analysis of chromosome 3 of the plant Arabidopsis thaliana.</title>
        <authorList>
            <person name="Salanoubat M."/>
            <person name="Lemcke K."/>
            <person name="Rieger M."/>
            <person name="Ansorge W."/>
            <person name="Unseld M."/>
            <person name="Fartmann B."/>
            <person name="Valle G."/>
            <person name="Bloecker H."/>
            <person name="Perez-Alonso M."/>
            <person name="Obermaier B."/>
            <person name="Delseny M."/>
            <person name="Boutry M."/>
            <person name="Grivell L.A."/>
            <person name="Mache R."/>
            <person name="Puigdomenech P."/>
            <person name="De Simone V."/>
            <person name="Choisne N."/>
            <person name="Artiguenave F."/>
            <person name="Robert C."/>
            <person name="Brottier P."/>
            <person name="Wincker P."/>
            <person name="Cattolico L."/>
            <person name="Weissenbach J."/>
            <person name="Saurin W."/>
            <person name="Quetier F."/>
            <person name="Schaefer M."/>
            <person name="Mueller-Auer S."/>
            <person name="Gabel C."/>
            <person name="Fuchs M."/>
            <person name="Benes V."/>
            <person name="Wurmbach E."/>
            <person name="Drzonek H."/>
            <person name="Erfle H."/>
            <person name="Jordan N."/>
            <person name="Bangert S."/>
            <person name="Wiedelmann R."/>
            <person name="Kranz H."/>
            <person name="Voss H."/>
            <person name="Holland R."/>
            <person name="Brandt P."/>
            <person name="Nyakatura G."/>
            <person name="Vezzi A."/>
            <person name="D'Angelo M."/>
            <person name="Pallavicini A."/>
            <person name="Toppo S."/>
            <person name="Simionati B."/>
            <person name="Conrad A."/>
            <person name="Hornischer K."/>
            <person name="Kauer G."/>
            <person name="Loehnert T.-H."/>
            <person name="Nordsiek G."/>
            <person name="Reichelt J."/>
            <person name="Scharfe M."/>
            <person name="Schoen O."/>
            <person name="Bargues M."/>
            <person name="Terol J."/>
            <person name="Climent J."/>
            <person name="Navarro P."/>
            <person name="Collado C."/>
            <person name="Perez-Perez A."/>
            <person name="Ottenwaelder B."/>
            <person name="Duchemin D."/>
            <person name="Cooke R."/>
            <person name="Laudie M."/>
            <person name="Berger-Llauro C."/>
            <person name="Purnelle B."/>
            <person name="Masuy D."/>
            <person name="de Haan M."/>
            <person name="Maarse A.C."/>
            <person name="Alcaraz J.-P."/>
            <person name="Cottet A."/>
            <person name="Casacuberta E."/>
            <person name="Monfort A."/>
            <person name="Argiriou A."/>
            <person name="Flores M."/>
            <person name="Liguori R."/>
            <person name="Vitale D."/>
            <person name="Mannhaupt G."/>
            <person name="Haase D."/>
            <person name="Schoof H."/>
            <person name="Rudd S."/>
            <person name="Zaccaria P."/>
            <person name="Mewes H.-W."/>
            <person name="Mayer K.F.X."/>
            <person name="Kaul S."/>
            <person name="Town C.D."/>
            <person name="Koo H.L."/>
            <person name="Tallon L.J."/>
            <person name="Jenkins J."/>
            <person name="Rooney T."/>
            <person name="Rizzo M."/>
            <person name="Walts A."/>
            <person name="Utterback T."/>
            <person name="Fujii C.Y."/>
            <person name="Shea T.P."/>
            <person name="Creasy T.H."/>
            <person name="Haas B."/>
            <person name="Maiti R."/>
            <person name="Wu D."/>
            <person name="Peterson J."/>
            <person name="Van Aken S."/>
            <person name="Pai G."/>
            <person name="Militscher J."/>
            <person name="Sellers P."/>
            <person name="Gill J.E."/>
            <person name="Feldblyum T.V."/>
            <person name="Preuss D."/>
            <person name="Lin X."/>
            <person name="Nierman W.C."/>
            <person name="Salzberg S.L."/>
            <person name="White O."/>
            <person name="Venter J.C."/>
            <person name="Fraser C.M."/>
            <person name="Kaneko T."/>
            <person name="Nakamura Y."/>
            <person name="Sato S."/>
            <person name="Kato T."/>
            <person name="Asamizu E."/>
            <person name="Sasamoto S."/>
            <person name="Kimura T."/>
            <person name="Idesawa K."/>
            <person name="Kawashima K."/>
            <person name="Kishida Y."/>
            <person name="Kiyokawa C."/>
            <person name="Kohara M."/>
            <person name="Matsumoto M."/>
            <person name="Matsuno A."/>
            <person name="Muraki A."/>
            <person name="Nakayama S."/>
            <person name="Nakazaki N."/>
            <person name="Shinpo S."/>
            <person name="Takeuchi C."/>
            <person name="Wada T."/>
            <person name="Watanabe A."/>
            <person name="Yamada M."/>
            <person name="Yasuda M."/>
            <person name="Tabata S."/>
        </authorList>
    </citation>
    <scope>NUCLEOTIDE SEQUENCE [LARGE SCALE GENOMIC DNA]</scope>
    <source>
        <strain>cv. Columbia</strain>
    </source>
</reference>
<reference key="2">
    <citation type="journal article" date="2017" name="Plant J.">
        <title>Araport11: a complete reannotation of the Arabidopsis thaliana reference genome.</title>
        <authorList>
            <person name="Cheng C.Y."/>
            <person name="Krishnakumar V."/>
            <person name="Chan A.P."/>
            <person name="Thibaud-Nissen F."/>
            <person name="Schobel S."/>
            <person name="Town C.D."/>
        </authorList>
    </citation>
    <scope>GENOME REANNOTATION</scope>
    <source>
        <strain>cv. Columbia</strain>
    </source>
</reference>
<reference key="3">
    <citation type="journal article" date="2003" name="Science">
        <title>Empirical analysis of transcriptional activity in the Arabidopsis genome.</title>
        <authorList>
            <person name="Yamada K."/>
            <person name="Lim J."/>
            <person name="Dale J.M."/>
            <person name="Chen H."/>
            <person name="Shinn P."/>
            <person name="Palm C.J."/>
            <person name="Southwick A.M."/>
            <person name="Wu H.C."/>
            <person name="Kim C.J."/>
            <person name="Nguyen M."/>
            <person name="Pham P.K."/>
            <person name="Cheuk R.F."/>
            <person name="Karlin-Newmann G."/>
            <person name="Liu S.X."/>
            <person name="Lam B."/>
            <person name="Sakano H."/>
            <person name="Wu T."/>
            <person name="Yu G."/>
            <person name="Miranda M."/>
            <person name="Quach H.L."/>
            <person name="Tripp M."/>
            <person name="Chang C.H."/>
            <person name="Lee J.M."/>
            <person name="Toriumi M.J."/>
            <person name="Chan M.M."/>
            <person name="Tang C.C."/>
            <person name="Onodera C.S."/>
            <person name="Deng J.M."/>
            <person name="Akiyama K."/>
            <person name="Ansari Y."/>
            <person name="Arakawa T."/>
            <person name="Banh J."/>
            <person name="Banno F."/>
            <person name="Bowser L."/>
            <person name="Brooks S.Y."/>
            <person name="Carninci P."/>
            <person name="Chao Q."/>
            <person name="Choy N."/>
            <person name="Enju A."/>
            <person name="Goldsmith A.D."/>
            <person name="Gurjal M."/>
            <person name="Hansen N.F."/>
            <person name="Hayashizaki Y."/>
            <person name="Johnson-Hopson C."/>
            <person name="Hsuan V.W."/>
            <person name="Iida K."/>
            <person name="Karnes M."/>
            <person name="Khan S."/>
            <person name="Koesema E."/>
            <person name="Ishida J."/>
            <person name="Jiang P.X."/>
            <person name="Jones T."/>
            <person name="Kawai J."/>
            <person name="Kamiya A."/>
            <person name="Meyers C."/>
            <person name="Nakajima M."/>
            <person name="Narusaka M."/>
            <person name="Seki M."/>
            <person name="Sakurai T."/>
            <person name="Satou M."/>
            <person name="Tamse R."/>
            <person name="Vaysberg M."/>
            <person name="Wallender E.K."/>
            <person name="Wong C."/>
            <person name="Yamamura Y."/>
            <person name="Yuan S."/>
            <person name="Shinozaki K."/>
            <person name="Davis R.W."/>
            <person name="Theologis A."/>
            <person name="Ecker J.R."/>
        </authorList>
    </citation>
    <scope>NUCLEOTIDE SEQUENCE [LARGE SCALE MRNA]</scope>
    <source>
        <strain>cv. Columbia</strain>
    </source>
</reference>
<reference key="4">
    <citation type="journal article" date="2004" name="Plant Physiol.">
        <title>The GATA family of transcription factors in Arabidopsis and rice.</title>
        <authorList>
            <person name="Reyes J.C."/>
            <person name="Muro-Pastor M.I."/>
            <person name="Florencio F.J."/>
        </authorList>
    </citation>
    <scope>GENE FAMILY ORGANIZATION</scope>
</reference>
<gene>
    <name type="primary">GATA6</name>
    <name type="ordered locus">At3g51080</name>
    <name type="ORF">F24M12.120</name>
</gene>
<keyword id="KW-0010">Activator</keyword>
<keyword id="KW-0238">DNA-binding</keyword>
<keyword id="KW-0479">Metal-binding</keyword>
<keyword id="KW-0539">Nucleus</keyword>
<keyword id="KW-1185">Reference proteome</keyword>
<keyword id="KW-0804">Transcription</keyword>
<keyword id="KW-0805">Transcription regulation</keyword>
<keyword id="KW-0862">Zinc</keyword>
<keyword id="KW-0863">Zinc-finger</keyword>
<dbReference type="EMBL" id="AL132980">
    <property type="protein sequence ID" value="CAB62630.1"/>
    <property type="molecule type" value="Genomic_DNA"/>
</dbReference>
<dbReference type="EMBL" id="CP002686">
    <property type="protein sequence ID" value="AEE78747.1"/>
    <property type="molecule type" value="Genomic_DNA"/>
</dbReference>
<dbReference type="EMBL" id="AY064048">
    <property type="protein sequence ID" value="AAL36404.1"/>
    <property type="molecule type" value="mRNA"/>
</dbReference>
<dbReference type="EMBL" id="AY117315">
    <property type="protein sequence ID" value="AAM51390.1"/>
    <property type="molecule type" value="mRNA"/>
</dbReference>
<dbReference type="PIR" id="T45739">
    <property type="entry name" value="T45739"/>
</dbReference>
<dbReference type="RefSeq" id="NP_190677.1">
    <property type="nucleotide sequence ID" value="NM_114968.4"/>
</dbReference>
<dbReference type="SMR" id="Q9SD38"/>
<dbReference type="BioGRID" id="9590">
    <property type="interactions" value="20"/>
</dbReference>
<dbReference type="FunCoup" id="Q9SD38">
    <property type="interactions" value="196"/>
</dbReference>
<dbReference type="IntAct" id="Q9SD38">
    <property type="interactions" value="20"/>
</dbReference>
<dbReference type="STRING" id="3702.Q9SD38"/>
<dbReference type="PaxDb" id="3702-AT3G51080.1"/>
<dbReference type="EnsemblPlants" id="AT3G51080.1">
    <property type="protein sequence ID" value="AT3G51080.1"/>
    <property type="gene ID" value="AT3G51080"/>
</dbReference>
<dbReference type="GeneID" id="824272"/>
<dbReference type="Gramene" id="AT3G51080.1">
    <property type="protein sequence ID" value="AT3G51080.1"/>
    <property type="gene ID" value="AT3G51080"/>
</dbReference>
<dbReference type="KEGG" id="ath:AT3G51080"/>
<dbReference type="Araport" id="AT3G51080"/>
<dbReference type="TAIR" id="AT3G51080">
    <property type="gene designation" value="GATA6"/>
</dbReference>
<dbReference type="eggNOG" id="KOG1601">
    <property type="taxonomic scope" value="Eukaryota"/>
</dbReference>
<dbReference type="HOGENOM" id="CLU_045755_1_1_1"/>
<dbReference type="InParanoid" id="Q9SD38"/>
<dbReference type="OMA" id="RVWSFNG"/>
<dbReference type="PhylomeDB" id="Q9SD38"/>
<dbReference type="PRO" id="PR:Q9SD38"/>
<dbReference type="Proteomes" id="UP000006548">
    <property type="component" value="Chromosome 3"/>
</dbReference>
<dbReference type="ExpressionAtlas" id="Q9SD38">
    <property type="expression patterns" value="baseline and differential"/>
</dbReference>
<dbReference type="GO" id="GO:0005634">
    <property type="term" value="C:nucleus"/>
    <property type="evidence" value="ECO:0007669"/>
    <property type="project" value="UniProtKB-SubCell"/>
</dbReference>
<dbReference type="GO" id="GO:0003700">
    <property type="term" value="F:DNA-binding transcription factor activity"/>
    <property type="evidence" value="ECO:0000250"/>
    <property type="project" value="TAIR"/>
</dbReference>
<dbReference type="GO" id="GO:0043565">
    <property type="term" value="F:sequence-specific DNA binding"/>
    <property type="evidence" value="ECO:0007669"/>
    <property type="project" value="InterPro"/>
</dbReference>
<dbReference type="GO" id="GO:0008270">
    <property type="term" value="F:zinc ion binding"/>
    <property type="evidence" value="ECO:0007669"/>
    <property type="project" value="UniProtKB-KW"/>
</dbReference>
<dbReference type="GO" id="GO:0045893">
    <property type="term" value="P:positive regulation of DNA-templated transcription"/>
    <property type="evidence" value="ECO:0007669"/>
    <property type="project" value="InterPro"/>
</dbReference>
<dbReference type="GO" id="GO:0009416">
    <property type="term" value="P:response to light stimulus"/>
    <property type="evidence" value="ECO:0000270"/>
    <property type="project" value="TAIR"/>
</dbReference>
<dbReference type="CDD" id="cd00202">
    <property type="entry name" value="ZnF_GATA"/>
    <property type="match status" value="1"/>
</dbReference>
<dbReference type="FunFam" id="3.30.50.10:FF:000018">
    <property type="entry name" value="GATA transcription factor"/>
    <property type="match status" value="1"/>
</dbReference>
<dbReference type="Gene3D" id="3.30.50.10">
    <property type="entry name" value="Erythroid Transcription Factor GATA-1, subunit A"/>
    <property type="match status" value="1"/>
</dbReference>
<dbReference type="InterPro" id="IPR051140">
    <property type="entry name" value="GATA_TF"/>
</dbReference>
<dbReference type="InterPro" id="IPR016679">
    <property type="entry name" value="TF_GATA_pln"/>
</dbReference>
<dbReference type="InterPro" id="IPR000679">
    <property type="entry name" value="Znf_GATA"/>
</dbReference>
<dbReference type="InterPro" id="IPR013088">
    <property type="entry name" value="Znf_NHR/GATA"/>
</dbReference>
<dbReference type="PANTHER" id="PTHR45658">
    <property type="entry name" value="GATA TRANSCRIPTION FACTOR"/>
    <property type="match status" value="1"/>
</dbReference>
<dbReference type="PANTHER" id="PTHR45658:SF74">
    <property type="entry name" value="GATA TRANSCRIPTION FACTOR 6"/>
    <property type="match status" value="1"/>
</dbReference>
<dbReference type="Pfam" id="PF00320">
    <property type="entry name" value="GATA"/>
    <property type="match status" value="1"/>
</dbReference>
<dbReference type="PIRSF" id="PIRSF016992">
    <property type="entry name" value="TF_GATA_plant"/>
    <property type="match status" value="1"/>
</dbReference>
<dbReference type="SMART" id="SM00401">
    <property type="entry name" value="ZnF_GATA"/>
    <property type="match status" value="1"/>
</dbReference>
<dbReference type="SUPFAM" id="SSF57716">
    <property type="entry name" value="Glucocorticoid receptor-like (DNA-binding domain)"/>
    <property type="match status" value="1"/>
</dbReference>
<dbReference type="PROSITE" id="PS00344">
    <property type="entry name" value="GATA_ZN_FINGER_1"/>
    <property type="match status" value="1"/>
</dbReference>
<dbReference type="PROSITE" id="PS50114">
    <property type="entry name" value="GATA_ZN_FINGER_2"/>
    <property type="match status" value="1"/>
</dbReference>
<organism>
    <name type="scientific">Arabidopsis thaliana</name>
    <name type="common">Mouse-ear cress</name>
    <dbReference type="NCBI Taxonomy" id="3702"/>
    <lineage>
        <taxon>Eukaryota</taxon>
        <taxon>Viridiplantae</taxon>
        <taxon>Streptophyta</taxon>
        <taxon>Embryophyta</taxon>
        <taxon>Tracheophyta</taxon>
        <taxon>Spermatophyta</taxon>
        <taxon>Magnoliopsida</taxon>
        <taxon>eudicotyledons</taxon>
        <taxon>Gunneridae</taxon>
        <taxon>Pentapetalae</taxon>
        <taxon>rosids</taxon>
        <taxon>malvids</taxon>
        <taxon>Brassicales</taxon>
        <taxon>Brassicaceae</taxon>
        <taxon>Camelineae</taxon>
        <taxon>Arabidopsis</taxon>
    </lineage>
</organism>
<proteinExistence type="evidence at transcript level"/>
<accession>Q9SD38</accession>
<protein>
    <recommendedName>
        <fullName>GATA transcription factor 6</fullName>
    </recommendedName>
</protein>
<feature type="chain" id="PRO_0000083438" description="GATA transcription factor 6">
    <location>
        <begin position="1"/>
        <end position="312"/>
    </location>
</feature>
<feature type="zinc finger region" description="GATA-type" evidence="3">
    <location>
        <begin position="217"/>
        <end position="271"/>
    </location>
</feature>
<feature type="region of interest" description="Disordered" evidence="4">
    <location>
        <begin position="1"/>
        <end position="33"/>
    </location>
</feature>
<feature type="region of interest" description="Disordered" evidence="4">
    <location>
        <begin position="56"/>
        <end position="77"/>
    </location>
</feature>
<feature type="region of interest" description="Disordered" evidence="4">
    <location>
        <begin position="136"/>
        <end position="186"/>
    </location>
</feature>
<feature type="short sequence motif" description="Nuclear localization signal" evidence="2">
    <location>
        <begin position="143"/>
        <end position="150"/>
    </location>
</feature>
<feature type="compositionally biased region" description="Basic and acidic residues" evidence="4">
    <location>
        <begin position="56"/>
        <end position="71"/>
    </location>
</feature>
<feature type="compositionally biased region" description="Basic residues" evidence="4">
    <location>
        <begin position="142"/>
        <end position="151"/>
    </location>
</feature>
<feature type="compositionally biased region" description="Low complexity" evidence="4">
    <location>
        <begin position="157"/>
        <end position="186"/>
    </location>
</feature>
<comment type="function">
    <text evidence="1">Transcriptional activator that specifically binds 5'-GATA-3' or 5'-GAT-3' motifs within gene promoters. May be involved in the regulation of some light-responsive genes (By similarity).</text>
</comment>
<comment type="subcellular location">
    <subcellularLocation>
        <location evidence="5">Nucleus</location>
    </subcellularLocation>
</comment>
<comment type="similarity">
    <text evidence="5">Belongs to the type IV zinc-finger family. Class A subfamily.</text>
</comment>